<evidence type="ECO:0000255" key="1">
    <source>
        <dbReference type="HAMAP-Rule" id="MF_00211"/>
    </source>
</evidence>
<evidence type="ECO:0000305" key="2"/>
<reference key="1">
    <citation type="journal article" date="1992" name="J. Bacteriol.">
        <title>Tryptophan biosynthesis genes in Lactococcus lactis subsp. lactis.</title>
        <authorList>
            <person name="Bardowski J."/>
            <person name="Ehrlich S.D."/>
            <person name="Chopin A."/>
        </authorList>
    </citation>
    <scope>NUCLEOTIDE SEQUENCE [GENOMIC DNA]</scope>
    <source>
        <strain>IL1403</strain>
    </source>
</reference>
<reference key="2">
    <citation type="journal article" date="2001" name="Genome Res.">
        <title>The complete genome sequence of the lactic acid bacterium Lactococcus lactis ssp. lactis IL1403.</title>
        <authorList>
            <person name="Bolotin A."/>
            <person name="Wincker P."/>
            <person name="Mauger S."/>
            <person name="Jaillon O."/>
            <person name="Malarme K."/>
            <person name="Weissenbach J."/>
            <person name="Ehrlich S.D."/>
            <person name="Sorokin A."/>
        </authorList>
    </citation>
    <scope>NUCLEOTIDE SEQUENCE [LARGE SCALE GENOMIC DNA]</scope>
    <source>
        <strain>IL1403</strain>
    </source>
</reference>
<gene>
    <name evidence="1" type="primary">trpD</name>
    <name type="ordered locus">LL1468</name>
    <name type="ORF">L0052</name>
</gene>
<dbReference type="EC" id="2.4.2.18" evidence="1"/>
<dbReference type="EMBL" id="M87483">
    <property type="protein sequence ID" value="AAA25225.1"/>
    <property type="molecule type" value="Genomic_DNA"/>
</dbReference>
<dbReference type="EMBL" id="AE005176">
    <property type="protein sequence ID" value="AAK05566.1"/>
    <property type="status" value="ALT_INIT"/>
    <property type="molecule type" value="Genomic_DNA"/>
</dbReference>
<dbReference type="PIR" id="D86808">
    <property type="entry name" value="D86808"/>
</dbReference>
<dbReference type="PIR" id="S35126">
    <property type="entry name" value="S35126"/>
</dbReference>
<dbReference type="RefSeq" id="NP_267624.2">
    <property type="nucleotide sequence ID" value="NC_002662.1"/>
</dbReference>
<dbReference type="RefSeq" id="WP_010905989.1">
    <property type="nucleotide sequence ID" value="NC_002662.1"/>
</dbReference>
<dbReference type="SMR" id="Q02000"/>
<dbReference type="PaxDb" id="272623-L0052"/>
<dbReference type="EnsemblBacteria" id="AAK05566">
    <property type="protein sequence ID" value="AAK05566"/>
    <property type="gene ID" value="L0052"/>
</dbReference>
<dbReference type="KEGG" id="lla:L0052"/>
<dbReference type="PATRIC" id="fig|272623.7.peg.1578"/>
<dbReference type="eggNOG" id="COG0547">
    <property type="taxonomic scope" value="Bacteria"/>
</dbReference>
<dbReference type="HOGENOM" id="CLU_034315_2_1_9"/>
<dbReference type="OrthoDB" id="9806430at2"/>
<dbReference type="UniPathway" id="UPA00035">
    <property type="reaction ID" value="UER00041"/>
</dbReference>
<dbReference type="Proteomes" id="UP000002196">
    <property type="component" value="Chromosome"/>
</dbReference>
<dbReference type="GO" id="GO:0005829">
    <property type="term" value="C:cytosol"/>
    <property type="evidence" value="ECO:0007669"/>
    <property type="project" value="TreeGrafter"/>
</dbReference>
<dbReference type="GO" id="GO:0004048">
    <property type="term" value="F:anthranilate phosphoribosyltransferase activity"/>
    <property type="evidence" value="ECO:0007669"/>
    <property type="project" value="UniProtKB-UniRule"/>
</dbReference>
<dbReference type="GO" id="GO:0000287">
    <property type="term" value="F:magnesium ion binding"/>
    <property type="evidence" value="ECO:0007669"/>
    <property type="project" value="UniProtKB-UniRule"/>
</dbReference>
<dbReference type="GO" id="GO:0000162">
    <property type="term" value="P:L-tryptophan biosynthetic process"/>
    <property type="evidence" value="ECO:0007669"/>
    <property type="project" value="UniProtKB-UniRule"/>
</dbReference>
<dbReference type="FunFam" id="3.40.1030.10:FF:000002">
    <property type="entry name" value="Anthranilate phosphoribosyltransferase"/>
    <property type="match status" value="1"/>
</dbReference>
<dbReference type="Gene3D" id="3.40.1030.10">
    <property type="entry name" value="Nucleoside phosphorylase/phosphoribosyltransferase catalytic domain"/>
    <property type="match status" value="1"/>
</dbReference>
<dbReference type="Gene3D" id="1.20.970.10">
    <property type="entry name" value="Transferase, Pyrimidine Nucleoside Phosphorylase, Chain C"/>
    <property type="match status" value="1"/>
</dbReference>
<dbReference type="HAMAP" id="MF_00211">
    <property type="entry name" value="TrpD"/>
    <property type="match status" value="1"/>
</dbReference>
<dbReference type="InterPro" id="IPR005940">
    <property type="entry name" value="Anthranilate_Pribosyl_Tfrase"/>
</dbReference>
<dbReference type="InterPro" id="IPR000312">
    <property type="entry name" value="Glycosyl_Trfase_fam3"/>
</dbReference>
<dbReference type="InterPro" id="IPR017459">
    <property type="entry name" value="Glycosyl_Trfase_fam3_N_dom"/>
</dbReference>
<dbReference type="InterPro" id="IPR036320">
    <property type="entry name" value="Glycosyl_Trfase_fam3_N_dom_sf"/>
</dbReference>
<dbReference type="InterPro" id="IPR035902">
    <property type="entry name" value="Nuc_phospho_transferase"/>
</dbReference>
<dbReference type="NCBIfam" id="TIGR01245">
    <property type="entry name" value="trpD"/>
    <property type="match status" value="1"/>
</dbReference>
<dbReference type="PANTHER" id="PTHR43285">
    <property type="entry name" value="ANTHRANILATE PHOSPHORIBOSYLTRANSFERASE"/>
    <property type="match status" value="1"/>
</dbReference>
<dbReference type="PANTHER" id="PTHR43285:SF2">
    <property type="entry name" value="ANTHRANILATE PHOSPHORIBOSYLTRANSFERASE"/>
    <property type="match status" value="1"/>
</dbReference>
<dbReference type="Pfam" id="PF02885">
    <property type="entry name" value="Glycos_trans_3N"/>
    <property type="match status" value="1"/>
</dbReference>
<dbReference type="Pfam" id="PF00591">
    <property type="entry name" value="Glycos_transf_3"/>
    <property type="match status" value="1"/>
</dbReference>
<dbReference type="SUPFAM" id="SSF52418">
    <property type="entry name" value="Nucleoside phosphorylase/phosphoribosyltransferase catalytic domain"/>
    <property type="match status" value="1"/>
</dbReference>
<dbReference type="SUPFAM" id="SSF47648">
    <property type="entry name" value="Nucleoside phosphorylase/phosphoribosyltransferase N-terminal domain"/>
    <property type="match status" value="1"/>
</dbReference>
<sequence length="335" mass="35845">MKNELEKVMSGRDMTENEMNMLANSIIQGELSEVQIASFLVALKMKGEAASELTGLARALQKAAIPIPTNLTNAMDNCGTGGDRSFSFNISTTAAFVLAAGGVNMAKHGNRSITSKSGSADVLEALGINLYLPAEKLAQVFDKVGLVFLFAQNLHPAMKYFTPVRRQLEIPTIMNLTGPLINPIPLDTQLLGTSRPDLLELTANVLKGLGRKRALVITGEGGMDEATPFGLNHYALLENDKVTLHEFRASEVGISEVQLNDIRGGEAPENAEILKNVLENQPSAFLETTVLNAGLGFYANGKVDSIKSGVDLAREVISTGAALTKLHELQAEQIG</sequence>
<keyword id="KW-0028">Amino-acid biosynthesis</keyword>
<keyword id="KW-0057">Aromatic amino acid biosynthesis</keyword>
<keyword id="KW-0328">Glycosyltransferase</keyword>
<keyword id="KW-0460">Magnesium</keyword>
<keyword id="KW-0479">Metal-binding</keyword>
<keyword id="KW-1185">Reference proteome</keyword>
<keyword id="KW-0808">Transferase</keyword>
<keyword id="KW-0822">Tryptophan biosynthesis</keyword>
<protein>
    <recommendedName>
        <fullName evidence="1">Anthranilate phosphoribosyltransferase</fullName>
        <ecNumber evidence="1">2.4.2.18</ecNumber>
    </recommendedName>
</protein>
<proteinExistence type="inferred from homology"/>
<feature type="chain" id="PRO_0000154452" description="Anthranilate phosphoribosyltransferase">
    <location>
        <begin position="1"/>
        <end position="335"/>
    </location>
</feature>
<feature type="binding site" evidence="1">
    <location>
        <position position="79"/>
    </location>
    <ligand>
        <name>5-phospho-alpha-D-ribose 1-diphosphate</name>
        <dbReference type="ChEBI" id="CHEBI:58017"/>
    </ligand>
</feature>
<feature type="binding site" evidence="1">
    <location>
        <position position="79"/>
    </location>
    <ligand>
        <name>anthranilate</name>
        <dbReference type="ChEBI" id="CHEBI:16567"/>
        <label>1</label>
    </ligand>
</feature>
<feature type="binding site" evidence="1">
    <location>
        <begin position="82"/>
        <end position="83"/>
    </location>
    <ligand>
        <name>5-phospho-alpha-D-ribose 1-diphosphate</name>
        <dbReference type="ChEBI" id="CHEBI:58017"/>
    </ligand>
</feature>
<feature type="binding site" evidence="1">
    <location>
        <position position="87"/>
    </location>
    <ligand>
        <name>5-phospho-alpha-D-ribose 1-diphosphate</name>
        <dbReference type="ChEBI" id="CHEBI:58017"/>
    </ligand>
</feature>
<feature type="binding site" evidence="1">
    <location>
        <begin position="89"/>
        <end position="92"/>
    </location>
    <ligand>
        <name>5-phospho-alpha-D-ribose 1-diphosphate</name>
        <dbReference type="ChEBI" id="CHEBI:58017"/>
    </ligand>
</feature>
<feature type="binding site" evidence="1">
    <location>
        <position position="91"/>
    </location>
    <ligand>
        <name>Mg(2+)</name>
        <dbReference type="ChEBI" id="CHEBI:18420"/>
        <label>1</label>
    </ligand>
</feature>
<feature type="binding site" evidence="1">
    <location>
        <begin position="107"/>
        <end position="115"/>
    </location>
    <ligand>
        <name>5-phospho-alpha-D-ribose 1-diphosphate</name>
        <dbReference type="ChEBI" id="CHEBI:58017"/>
    </ligand>
</feature>
<feature type="binding site" evidence="1">
    <location>
        <position position="110"/>
    </location>
    <ligand>
        <name>anthranilate</name>
        <dbReference type="ChEBI" id="CHEBI:16567"/>
        <label>1</label>
    </ligand>
</feature>
<feature type="binding site" evidence="1">
    <location>
        <position position="119"/>
    </location>
    <ligand>
        <name>5-phospho-alpha-D-ribose 1-diphosphate</name>
        <dbReference type="ChEBI" id="CHEBI:58017"/>
    </ligand>
</feature>
<feature type="binding site" evidence="1">
    <location>
        <position position="165"/>
    </location>
    <ligand>
        <name>anthranilate</name>
        <dbReference type="ChEBI" id="CHEBI:16567"/>
        <label>2</label>
    </ligand>
</feature>
<feature type="binding site" evidence="1">
    <location>
        <position position="224"/>
    </location>
    <ligand>
        <name>Mg(2+)</name>
        <dbReference type="ChEBI" id="CHEBI:18420"/>
        <label>2</label>
    </ligand>
</feature>
<feature type="binding site" evidence="1">
    <location>
        <position position="225"/>
    </location>
    <ligand>
        <name>Mg(2+)</name>
        <dbReference type="ChEBI" id="CHEBI:18420"/>
        <label>1</label>
    </ligand>
</feature>
<feature type="binding site" evidence="1">
    <location>
        <position position="225"/>
    </location>
    <ligand>
        <name>Mg(2+)</name>
        <dbReference type="ChEBI" id="CHEBI:18420"/>
        <label>2</label>
    </ligand>
</feature>
<organism>
    <name type="scientific">Lactococcus lactis subsp. lactis (strain IL1403)</name>
    <name type="common">Streptococcus lactis</name>
    <dbReference type="NCBI Taxonomy" id="272623"/>
    <lineage>
        <taxon>Bacteria</taxon>
        <taxon>Bacillati</taxon>
        <taxon>Bacillota</taxon>
        <taxon>Bacilli</taxon>
        <taxon>Lactobacillales</taxon>
        <taxon>Streptococcaceae</taxon>
        <taxon>Lactococcus</taxon>
    </lineage>
</organism>
<comment type="function">
    <text evidence="1">Catalyzes the transfer of the phosphoribosyl group of 5-phosphorylribose-1-pyrophosphate (PRPP) to anthranilate to yield N-(5'-phosphoribosyl)-anthranilate (PRA).</text>
</comment>
<comment type="catalytic activity">
    <reaction evidence="1">
        <text>N-(5-phospho-beta-D-ribosyl)anthranilate + diphosphate = 5-phospho-alpha-D-ribose 1-diphosphate + anthranilate</text>
        <dbReference type="Rhea" id="RHEA:11768"/>
        <dbReference type="ChEBI" id="CHEBI:16567"/>
        <dbReference type="ChEBI" id="CHEBI:18277"/>
        <dbReference type="ChEBI" id="CHEBI:33019"/>
        <dbReference type="ChEBI" id="CHEBI:58017"/>
        <dbReference type="EC" id="2.4.2.18"/>
    </reaction>
</comment>
<comment type="cofactor">
    <cofactor evidence="1">
        <name>Mg(2+)</name>
        <dbReference type="ChEBI" id="CHEBI:18420"/>
    </cofactor>
    <text evidence="1">Binds 2 magnesium ions per monomer.</text>
</comment>
<comment type="pathway">
    <text evidence="1">Amino-acid biosynthesis; L-tryptophan biosynthesis; L-tryptophan from chorismate: step 2/5.</text>
</comment>
<comment type="subunit">
    <text evidence="1">Homodimer.</text>
</comment>
<comment type="similarity">
    <text evidence="1">Belongs to the anthranilate phosphoribosyltransferase family.</text>
</comment>
<comment type="sequence caution" evidence="2">
    <conflict type="erroneous initiation">
        <sequence resource="EMBL-CDS" id="AAK05566"/>
    </conflict>
    <text>Extended N-terminus.</text>
</comment>
<name>TRPD_LACLA</name>
<accession>Q02000</accession>
<accession>Q9CFK5</accession>